<organism>
    <name type="scientific">Citrifermentans bemidjiense (strain ATCC BAA-1014 / DSM 16622 / JCM 12645 / Bem)</name>
    <name type="common">Geobacter bemidjiensis</name>
    <dbReference type="NCBI Taxonomy" id="404380"/>
    <lineage>
        <taxon>Bacteria</taxon>
        <taxon>Pseudomonadati</taxon>
        <taxon>Thermodesulfobacteriota</taxon>
        <taxon>Desulfuromonadia</taxon>
        <taxon>Geobacterales</taxon>
        <taxon>Geobacteraceae</taxon>
        <taxon>Citrifermentans</taxon>
    </lineage>
</organism>
<sequence>MSEKTKEKVSLVSLGCPKNLVDAEVMLGYLSQDEYEVTTDETQADIIVVNTCSFIKEAKQESIDTILDLADRKHDARCKLLIVTGCLPQRYQQELAKELPEVDIFIGTGDYPRIAEIIAEKKQTEEQLCYTGDPNFVYNDEVPRLQSSPHYTAYLKIAEGCSNNCSYCVIPSLRGGHRSRPLATLLAEAKALVEGGVKELNLIAQDITAYGRDLEGKPSLELLIKELVKMEKLKWIRLLYAYPDGVTDSLIQLIKEEPKVCKYLDLPIQHISDPVLSNMKRRSGEAEIRTLISKLRREIPDIAIRTSLIVGFPGETTDDFKKLLQFVEQTRFDRLGVFCYSREDGTPAAEMPDQVSERIKRERHKKLMRTQARVSFKHNRTLVDSEEDVLVEGYSEETELLLKGRSSRQAPDVDGLVYITAGNANVGDIVRLKITDSSDYDLIGEIVD</sequence>
<proteinExistence type="inferred from homology"/>
<accession>B5ED60</accession>
<comment type="function">
    <text evidence="1">Catalyzes the methylthiolation of an aspartic acid residue of ribosomal protein uS12.</text>
</comment>
<comment type="catalytic activity">
    <reaction evidence="1">
        <text>L-aspartate(89)-[ribosomal protein uS12]-hydrogen + (sulfur carrier)-SH + AH2 + 2 S-adenosyl-L-methionine = 3-methylsulfanyl-L-aspartate(89)-[ribosomal protein uS12]-hydrogen + (sulfur carrier)-H + 5'-deoxyadenosine + L-methionine + A + S-adenosyl-L-homocysteine + 2 H(+)</text>
        <dbReference type="Rhea" id="RHEA:37087"/>
        <dbReference type="Rhea" id="RHEA-COMP:10460"/>
        <dbReference type="Rhea" id="RHEA-COMP:10461"/>
        <dbReference type="Rhea" id="RHEA-COMP:14737"/>
        <dbReference type="Rhea" id="RHEA-COMP:14739"/>
        <dbReference type="ChEBI" id="CHEBI:13193"/>
        <dbReference type="ChEBI" id="CHEBI:15378"/>
        <dbReference type="ChEBI" id="CHEBI:17319"/>
        <dbReference type="ChEBI" id="CHEBI:17499"/>
        <dbReference type="ChEBI" id="CHEBI:29917"/>
        <dbReference type="ChEBI" id="CHEBI:29961"/>
        <dbReference type="ChEBI" id="CHEBI:57844"/>
        <dbReference type="ChEBI" id="CHEBI:57856"/>
        <dbReference type="ChEBI" id="CHEBI:59789"/>
        <dbReference type="ChEBI" id="CHEBI:64428"/>
        <dbReference type="ChEBI" id="CHEBI:73599"/>
        <dbReference type="EC" id="2.8.4.4"/>
    </reaction>
</comment>
<comment type="cofactor">
    <cofactor evidence="1">
        <name>[4Fe-4S] cluster</name>
        <dbReference type="ChEBI" id="CHEBI:49883"/>
    </cofactor>
    <text evidence="1">Binds 2 [4Fe-4S] clusters. One cluster is coordinated with 3 cysteines and an exchangeable S-adenosyl-L-methionine.</text>
</comment>
<comment type="subcellular location">
    <subcellularLocation>
        <location evidence="1">Cytoplasm</location>
    </subcellularLocation>
</comment>
<comment type="similarity">
    <text evidence="1">Belongs to the methylthiotransferase family. RimO subfamily.</text>
</comment>
<protein>
    <recommendedName>
        <fullName evidence="1">Ribosomal protein uS12 methylthiotransferase RimO</fullName>
        <shortName evidence="1">uS12 MTTase</shortName>
        <shortName evidence="1">uS12 methylthiotransferase</shortName>
        <ecNumber evidence="1">2.8.4.4</ecNumber>
    </recommendedName>
    <alternativeName>
        <fullName evidence="1">Ribosomal protein uS12 (aspartate-C(3))-methylthiotransferase</fullName>
    </alternativeName>
    <alternativeName>
        <fullName evidence="1">Ribosome maturation factor RimO</fullName>
    </alternativeName>
</protein>
<name>RIMO_CITBB</name>
<reference key="1">
    <citation type="submission" date="2008-07" db="EMBL/GenBank/DDBJ databases">
        <title>Complete sequence of Geobacter bemidjiensis BEM.</title>
        <authorList>
            <consortium name="US DOE Joint Genome Institute"/>
            <person name="Lucas S."/>
            <person name="Copeland A."/>
            <person name="Lapidus A."/>
            <person name="Glavina del Rio T."/>
            <person name="Dalin E."/>
            <person name="Tice H."/>
            <person name="Bruce D."/>
            <person name="Goodwin L."/>
            <person name="Pitluck S."/>
            <person name="Kiss H."/>
            <person name="Brettin T."/>
            <person name="Detter J.C."/>
            <person name="Han C."/>
            <person name="Kuske C.R."/>
            <person name="Schmutz J."/>
            <person name="Larimer F."/>
            <person name="Land M."/>
            <person name="Hauser L."/>
            <person name="Kyrpides N."/>
            <person name="Lykidis A."/>
            <person name="Lovley D."/>
            <person name="Richardson P."/>
        </authorList>
    </citation>
    <scope>NUCLEOTIDE SEQUENCE [LARGE SCALE GENOMIC DNA]</scope>
    <source>
        <strain>ATCC BAA-1014 / DSM 16622 / JCM 12645 / Bem</strain>
    </source>
</reference>
<gene>
    <name evidence="1" type="primary">rimO</name>
    <name type="ordered locus">Gbem_0618</name>
</gene>
<feature type="chain" id="PRO_0000374843" description="Ribosomal protein uS12 methylthiotransferase RimO">
    <location>
        <begin position="1"/>
        <end position="448"/>
    </location>
</feature>
<feature type="domain" description="MTTase N-terminal" evidence="1">
    <location>
        <begin position="7"/>
        <end position="123"/>
    </location>
</feature>
<feature type="domain" description="Radical SAM core" evidence="2">
    <location>
        <begin position="147"/>
        <end position="377"/>
    </location>
</feature>
<feature type="domain" description="TRAM" evidence="1">
    <location>
        <begin position="380"/>
        <end position="448"/>
    </location>
</feature>
<feature type="binding site" evidence="1">
    <location>
        <position position="16"/>
    </location>
    <ligand>
        <name>[4Fe-4S] cluster</name>
        <dbReference type="ChEBI" id="CHEBI:49883"/>
        <label>1</label>
    </ligand>
</feature>
<feature type="binding site" evidence="1">
    <location>
        <position position="52"/>
    </location>
    <ligand>
        <name>[4Fe-4S] cluster</name>
        <dbReference type="ChEBI" id="CHEBI:49883"/>
        <label>1</label>
    </ligand>
</feature>
<feature type="binding site" evidence="1">
    <location>
        <position position="86"/>
    </location>
    <ligand>
        <name>[4Fe-4S] cluster</name>
        <dbReference type="ChEBI" id="CHEBI:49883"/>
        <label>1</label>
    </ligand>
</feature>
<feature type="binding site" evidence="1">
    <location>
        <position position="161"/>
    </location>
    <ligand>
        <name>[4Fe-4S] cluster</name>
        <dbReference type="ChEBI" id="CHEBI:49883"/>
        <label>2</label>
        <note>4Fe-4S-S-AdoMet</note>
    </ligand>
</feature>
<feature type="binding site" evidence="1">
    <location>
        <position position="165"/>
    </location>
    <ligand>
        <name>[4Fe-4S] cluster</name>
        <dbReference type="ChEBI" id="CHEBI:49883"/>
        <label>2</label>
        <note>4Fe-4S-S-AdoMet</note>
    </ligand>
</feature>
<feature type="binding site" evidence="1">
    <location>
        <position position="168"/>
    </location>
    <ligand>
        <name>[4Fe-4S] cluster</name>
        <dbReference type="ChEBI" id="CHEBI:49883"/>
        <label>2</label>
        <note>4Fe-4S-S-AdoMet</note>
    </ligand>
</feature>
<dbReference type="EC" id="2.8.4.4" evidence="1"/>
<dbReference type="EMBL" id="CP001124">
    <property type="protein sequence ID" value="ACH37646.1"/>
    <property type="molecule type" value="Genomic_DNA"/>
</dbReference>
<dbReference type="RefSeq" id="WP_012529053.1">
    <property type="nucleotide sequence ID" value="NC_011146.1"/>
</dbReference>
<dbReference type="SMR" id="B5ED60"/>
<dbReference type="STRING" id="404380.Gbem_0618"/>
<dbReference type="KEGG" id="gbm:Gbem_0618"/>
<dbReference type="eggNOG" id="COG0621">
    <property type="taxonomic scope" value="Bacteria"/>
</dbReference>
<dbReference type="HOGENOM" id="CLU_018697_0_1_7"/>
<dbReference type="OrthoDB" id="9805215at2"/>
<dbReference type="Proteomes" id="UP000008825">
    <property type="component" value="Chromosome"/>
</dbReference>
<dbReference type="GO" id="GO:0005829">
    <property type="term" value="C:cytosol"/>
    <property type="evidence" value="ECO:0007669"/>
    <property type="project" value="TreeGrafter"/>
</dbReference>
<dbReference type="GO" id="GO:0051539">
    <property type="term" value="F:4 iron, 4 sulfur cluster binding"/>
    <property type="evidence" value="ECO:0007669"/>
    <property type="project" value="UniProtKB-UniRule"/>
</dbReference>
<dbReference type="GO" id="GO:0035599">
    <property type="term" value="F:aspartic acid methylthiotransferase activity"/>
    <property type="evidence" value="ECO:0007669"/>
    <property type="project" value="TreeGrafter"/>
</dbReference>
<dbReference type="GO" id="GO:0046872">
    <property type="term" value="F:metal ion binding"/>
    <property type="evidence" value="ECO:0007669"/>
    <property type="project" value="UniProtKB-KW"/>
</dbReference>
<dbReference type="GO" id="GO:0103039">
    <property type="term" value="F:protein methylthiotransferase activity"/>
    <property type="evidence" value="ECO:0007669"/>
    <property type="project" value="UniProtKB-EC"/>
</dbReference>
<dbReference type="GO" id="GO:0006400">
    <property type="term" value="P:tRNA modification"/>
    <property type="evidence" value="ECO:0007669"/>
    <property type="project" value="InterPro"/>
</dbReference>
<dbReference type="CDD" id="cd01335">
    <property type="entry name" value="Radical_SAM"/>
    <property type="match status" value="1"/>
</dbReference>
<dbReference type="FunFam" id="3.40.50.12160:FF:000002">
    <property type="entry name" value="Ribosomal protein S12 methylthiotransferase RimO"/>
    <property type="match status" value="1"/>
</dbReference>
<dbReference type="FunFam" id="3.80.30.20:FF:000001">
    <property type="entry name" value="tRNA-2-methylthio-N(6)-dimethylallyladenosine synthase 2"/>
    <property type="match status" value="1"/>
</dbReference>
<dbReference type="Gene3D" id="3.40.50.12160">
    <property type="entry name" value="Methylthiotransferase, N-terminal domain"/>
    <property type="match status" value="1"/>
</dbReference>
<dbReference type="Gene3D" id="2.40.50.140">
    <property type="entry name" value="Nucleic acid-binding proteins"/>
    <property type="match status" value="1"/>
</dbReference>
<dbReference type="Gene3D" id="3.80.30.20">
    <property type="entry name" value="tm_1862 like domain"/>
    <property type="match status" value="1"/>
</dbReference>
<dbReference type="HAMAP" id="MF_01865">
    <property type="entry name" value="MTTase_RimO"/>
    <property type="match status" value="1"/>
</dbReference>
<dbReference type="InterPro" id="IPR006638">
    <property type="entry name" value="Elp3/MiaA/NifB-like_rSAM"/>
</dbReference>
<dbReference type="InterPro" id="IPR005839">
    <property type="entry name" value="Methylthiotransferase"/>
</dbReference>
<dbReference type="InterPro" id="IPR020612">
    <property type="entry name" value="Methylthiotransferase_CS"/>
</dbReference>
<dbReference type="InterPro" id="IPR013848">
    <property type="entry name" value="Methylthiotransferase_N"/>
</dbReference>
<dbReference type="InterPro" id="IPR038135">
    <property type="entry name" value="Methylthiotransferase_N_sf"/>
</dbReference>
<dbReference type="InterPro" id="IPR012340">
    <property type="entry name" value="NA-bd_OB-fold"/>
</dbReference>
<dbReference type="InterPro" id="IPR005840">
    <property type="entry name" value="Ribosomal_uS12_MeSTrfase_RimO"/>
</dbReference>
<dbReference type="InterPro" id="IPR007197">
    <property type="entry name" value="rSAM"/>
</dbReference>
<dbReference type="InterPro" id="IPR023404">
    <property type="entry name" value="rSAM_horseshoe"/>
</dbReference>
<dbReference type="InterPro" id="IPR002792">
    <property type="entry name" value="TRAM_dom"/>
</dbReference>
<dbReference type="NCBIfam" id="TIGR01125">
    <property type="entry name" value="30S ribosomal protein S12 methylthiotransferase RimO"/>
    <property type="match status" value="1"/>
</dbReference>
<dbReference type="NCBIfam" id="TIGR00089">
    <property type="entry name" value="MiaB/RimO family radical SAM methylthiotransferase"/>
    <property type="match status" value="1"/>
</dbReference>
<dbReference type="PANTHER" id="PTHR43837">
    <property type="entry name" value="RIBOSOMAL PROTEIN S12 METHYLTHIOTRANSFERASE RIMO"/>
    <property type="match status" value="1"/>
</dbReference>
<dbReference type="PANTHER" id="PTHR43837:SF1">
    <property type="entry name" value="RIBOSOMAL PROTEIN US12 METHYLTHIOTRANSFERASE RIMO"/>
    <property type="match status" value="1"/>
</dbReference>
<dbReference type="Pfam" id="PF04055">
    <property type="entry name" value="Radical_SAM"/>
    <property type="match status" value="1"/>
</dbReference>
<dbReference type="Pfam" id="PF18693">
    <property type="entry name" value="TRAM_2"/>
    <property type="match status" value="1"/>
</dbReference>
<dbReference type="Pfam" id="PF00919">
    <property type="entry name" value="UPF0004"/>
    <property type="match status" value="1"/>
</dbReference>
<dbReference type="SFLD" id="SFLDG01082">
    <property type="entry name" value="B12-binding_domain_containing"/>
    <property type="match status" value="1"/>
</dbReference>
<dbReference type="SFLD" id="SFLDS00029">
    <property type="entry name" value="Radical_SAM"/>
    <property type="match status" value="1"/>
</dbReference>
<dbReference type="SFLD" id="SFLDF00274">
    <property type="entry name" value="ribosomal_protein_S12_methylth"/>
    <property type="match status" value="1"/>
</dbReference>
<dbReference type="SMART" id="SM00729">
    <property type="entry name" value="Elp3"/>
    <property type="match status" value="1"/>
</dbReference>
<dbReference type="SUPFAM" id="SSF102114">
    <property type="entry name" value="Radical SAM enzymes"/>
    <property type="match status" value="1"/>
</dbReference>
<dbReference type="PROSITE" id="PS51449">
    <property type="entry name" value="MTTASE_N"/>
    <property type="match status" value="1"/>
</dbReference>
<dbReference type="PROSITE" id="PS01278">
    <property type="entry name" value="MTTASE_RADICAL"/>
    <property type="match status" value="1"/>
</dbReference>
<dbReference type="PROSITE" id="PS51918">
    <property type="entry name" value="RADICAL_SAM"/>
    <property type="match status" value="1"/>
</dbReference>
<dbReference type="PROSITE" id="PS50926">
    <property type="entry name" value="TRAM"/>
    <property type="match status" value="1"/>
</dbReference>
<evidence type="ECO:0000255" key="1">
    <source>
        <dbReference type="HAMAP-Rule" id="MF_01865"/>
    </source>
</evidence>
<evidence type="ECO:0000255" key="2">
    <source>
        <dbReference type="PROSITE-ProRule" id="PRU01266"/>
    </source>
</evidence>
<keyword id="KW-0004">4Fe-4S</keyword>
<keyword id="KW-0963">Cytoplasm</keyword>
<keyword id="KW-0408">Iron</keyword>
<keyword id="KW-0411">Iron-sulfur</keyword>
<keyword id="KW-0479">Metal-binding</keyword>
<keyword id="KW-1185">Reference proteome</keyword>
<keyword id="KW-0949">S-adenosyl-L-methionine</keyword>
<keyword id="KW-0808">Transferase</keyword>